<feature type="chain" id="PRO_0000143700" description="Maturase K">
    <location>
        <begin position="1"/>
        <end position="353" status="greater than"/>
    </location>
</feature>
<feature type="non-terminal residue">
    <location>
        <position position="353"/>
    </location>
</feature>
<evidence type="ECO:0000250" key="1"/>
<evidence type="ECO:0000305" key="2"/>
<sequence>MGEFPGYFELDKFWQQDFLYPLIFQEYIYALAHDHVLNRFILLDNFGYDNKSSSLVVKRLITRMCQQNHLIISANDSNQNPLWGHNKNLYSQIISEGFAVIVEIPFSLRLVAYVERKEIVKSQNQNLRSIHSIFPFLEDNFVHLNYVSDILIPYPIHLELEVQTLRSWFKDASFLHLLRFLLYEYQNCNRLSTLTPKKSISIVSKSNQRFFLFLYNSYVCEYESIFIFLCNQSSHLRSTSFGTLVERIYFYGKRETLVEVVSNDFSLVLWLCKNPLMHYVRYQGKAILASKGTPLLMKKWKYYLVNFWQCHLSVWSNPVRIHINQLSNHSFGFLGYLASVRVNRSMVRSQMLE</sequence>
<gene>
    <name type="primary">matK</name>
    <name type="synonym">ycf14</name>
</gene>
<accession>Q33119</accession>
<geneLocation type="chloroplast"/>
<reference key="1">
    <citation type="journal article" date="1994" name="Syst. Bot.">
        <title>matK DNA sequences and phylogenetic reconstruction in Saxifragaceae sensu stricto.</title>
        <authorList>
            <person name="Johnson L.A."/>
            <person name="Soltis D.E."/>
        </authorList>
        <dbReference type="AGRICOLA" id="IND20396215"/>
    </citation>
    <scope>NUCLEOTIDE SEQUENCE [GENOMIC DNA]</scope>
    <source>
        <tissue>Leaf</tissue>
    </source>
</reference>
<protein>
    <recommendedName>
        <fullName>Maturase K</fullName>
    </recommendedName>
    <alternativeName>
        <fullName>Intron maturase</fullName>
    </alternativeName>
</protein>
<dbReference type="EMBL" id="L34142">
    <property type="protein sequence ID" value="AAA84603.1"/>
    <property type="molecule type" value="Genomic_DNA"/>
</dbReference>
<dbReference type="GO" id="GO:0009507">
    <property type="term" value="C:chloroplast"/>
    <property type="evidence" value="ECO:0007669"/>
    <property type="project" value="UniProtKB-SubCell"/>
</dbReference>
<dbReference type="GO" id="GO:0003723">
    <property type="term" value="F:RNA binding"/>
    <property type="evidence" value="ECO:0007669"/>
    <property type="project" value="UniProtKB-KW"/>
</dbReference>
<dbReference type="GO" id="GO:0006397">
    <property type="term" value="P:mRNA processing"/>
    <property type="evidence" value="ECO:0007669"/>
    <property type="project" value="UniProtKB-KW"/>
</dbReference>
<dbReference type="GO" id="GO:0008033">
    <property type="term" value="P:tRNA processing"/>
    <property type="evidence" value="ECO:0007669"/>
    <property type="project" value="UniProtKB-KW"/>
</dbReference>
<dbReference type="InterPro" id="IPR002866">
    <property type="entry name" value="Maturase_MatK"/>
</dbReference>
<dbReference type="InterPro" id="IPR024942">
    <property type="entry name" value="Maturase_MatK_N"/>
</dbReference>
<dbReference type="PANTHER" id="PTHR34811">
    <property type="entry name" value="MATURASE K"/>
    <property type="match status" value="1"/>
</dbReference>
<dbReference type="PANTHER" id="PTHR34811:SF1">
    <property type="entry name" value="MATURASE K"/>
    <property type="match status" value="1"/>
</dbReference>
<dbReference type="Pfam" id="PF01824">
    <property type="entry name" value="MatK_N"/>
    <property type="match status" value="1"/>
</dbReference>
<comment type="function">
    <text evidence="1">Usually encoded in the trnK tRNA gene intron. Probably assists in splicing its own and other chloroplast group II introns (By similarity).</text>
</comment>
<comment type="subcellular location">
    <subcellularLocation>
        <location>Plastid</location>
        <location>Chloroplast</location>
    </subcellularLocation>
</comment>
<comment type="similarity">
    <text evidence="2">Belongs to the intron maturase 2 family. MatK subfamily.</text>
</comment>
<keyword id="KW-0150">Chloroplast</keyword>
<keyword id="KW-0507">mRNA processing</keyword>
<keyword id="KW-0934">Plastid</keyword>
<keyword id="KW-0694">RNA-binding</keyword>
<keyword id="KW-0819">tRNA processing</keyword>
<proteinExistence type="inferred from homology"/>
<name>MATK_SAXME</name>
<organism>
    <name type="scientific">Saxifraga mertensiana</name>
    <name type="common">Wood saxifrage</name>
    <dbReference type="NCBI Taxonomy" id="29770"/>
    <lineage>
        <taxon>Eukaryota</taxon>
        <taxon>Viridiplantae</taxon>
        <taxon>Streptophyta</taxon>
        <taxon>Embryophyta</taxon>
        <taxon>Tracheophyta</taxon>
        <taxon>Spermatophyta</taxon>
        <taxon>Magnoliopsida</taxon>
        <taxon>eudicotyledons</taxon>
        <taxon>Gunneridae</taxon>
        <taxon>Pentapetalae</taxon>
        <taxon>Saxifragales</taxon>
        <taxon>Saxifragaceae</taxon>
        <taxon>Saxifrageae</taxon>
        <taxon>Saxifraga</taxon>
    </lineage>
</organism>